<organism>
    <name type="scientific">Escherichia coli (strain K12)</name>
    <dbReference type="NCBI Taxonomy" id="83333"/>
    <lineage>
        <taxon>Bacteria</taxon>
        <taxon>Pseudomonadati</taxon>
        <taxon>Pseudomonadota</taxon>
        <taxon>Gammaproteobacteria</taxon>
        <taxon>Enterobacterales</taxon>
        <taxon>Enterobacteriaceae</taxon>
        <taxon>Escherichia</taxon>
    </lineage>
</organism>
<dbReference type="EC" id="2.7.7.65" evidence="1"/>
<dbReference type="EMBL" id="U00096">
    <property type="protein sequence ID" value="AAC74856.2"/>
    <property type="molecule type" value="Genomic_DNA"/>
</dbReference>
<dbReference type="EMBL" id="AP009048">
    <property type="protein sequence ID" value="BAA15587.2"/>
    <property type="molecule type" value="Genomic_DNA"/>
</dbReference>
<dbReference type="PIR" id="B64939">
    <property type="entry name" value="B64939"/>
</dbReference>
<dbReference type="RefSeq" id="NP_416300.2">
    <property type="nucleotide sequence ID" value="NC_000913.3"/>
</dbReference>
<dbReference type="RefSeq" id="WP_000766132.1">
    <property type="nucleotide sequence ID" value="NZ_SSZK01000001.1"/>
</dbReference>
<dbReference type="SMR" id="P76237"/>
<dbReference type="BioGRID" id="4260325">
    <property type="interactions" value="12"/>
</dbReference>
<dbReference type="BioGRID" id="850647">
    <property type="interactions" value="1"/>
</dbReference>
<dbReference type="DIP" id="DIP-11789N"/>
<dbReference type="FunCoup" id="P76237">
    <property type="interactions" value="10"/>
</dbReference>
<dbReference type="IntAct" id="P76237">
    <property type="interactions" value="2"/>
</dbReference>
<dbReference type="STRING" id="511145.b1786"/>
<dbReference type="jPOST" id="P76237"/>
<dbReference type="PaxDb" id="511145-b1786"/>
<dbReference type="EnsemblBacteria" id="AAC74856">
    <property type="protein sequence ID" value="AAC74856"/>
    <property type="gene ID" value="b1786"/>
</dbReference>
<dbReference type="GeneID" id="75203092"/>
<dbReference type="GeneID" id="946290"/>
<dbReference type="KEGG" id="ecj:JW5291"/>
<dbReference type="KEGG" id="eco:b1786"/>
<dbReference type="KEGG" id="ecoc:C3026_10185"/>
<dbReference type="PATRIC" id="fig|1411691.4.peg.468"/>
<dbReference type="EchoBASE" id="EB3269"/>
<dbReference type="eggNOG" id="COG2199">
    <property type="taxonomic scope" value="Bacteria"/>
</dbReference>
<dbReference type="HOGENOM" id="CLU_042022_1_0_6"/>
<dbReference type="InParanoid" id="P76237"/>
<dbReference type="OMA" id="EFCVILI"/>
<dbReference type="OrthoDB" id="6395678at2"/>
<dbReference type="PhylomeDB" id="P76237"/>
<dbReference type="BioCyc" id="EcoCyc:G6972-MONOMER"/>
<dbReference type="BioCyc" id="MetaCyc:G6972-MONOMER"/>
<dbReference type="UniPathway" id="UPA00599"/>
<dbReference type="PRO" id="PR:P76237"/>
<dbReference type="Proteomes" id="UP000000625">
    <property type="component" value="Chromosome"/>
</dbReference>
<dbReference type="GO" id="GO:0005886">
    <property type="term" value="C:plasma membrane"/>
    <property type="evidence" value="ECO:0000314"/>
    <property type="project" value="EcoCyc"/>
</dbReference>
<dbReference type="GO" id="GO:0052621">
    <property type="term" value="F:diguanylate cyclase activity"/>
    <property type="evidence" value="ECO:0000269"/>
    <property type="project" value="EcoCyc"/>
</dbReference>
<dbReference type="GO" id="GO:0005525">
    <property type="term" value="F:GTP binding"/>
    <property type="evidence" value="ECO:0007669"/>
    <property type="project" value="UniProtKB-KW"/>
</dbReference>
<dbReference type="GO" id="GO:0046872">
    <property type="term" value="F:metal ion binding"/>
    <property type="evidence" value="ECO:0007669"/>
    <property type="project" value="UniProtKB-KW"/>
</dbReference>
<dbReference type="GO" id="GO:0043709">
    <property type="term" value="P:cell adhesion involved in single-species biofilm formation"/>
    <property type="evidence" value="ECO:0000318"/>
    <property type="project" value="GO_Central"/>
</dbReference>
<dbReference type="GO" id="GO:1902201">
    <property type="term" value="P:negative regulation of bacterial-type flagellum-dependent cell motility"/>
    <property type="evidence" value="ECO:0000315"/>
    <property type="project" value="EcoCyc"/>
</dbReference>
<dbReference type="CDD" id="cd01949">
    <property type="entry name" value="GGDEF"/>
    <property type="match status" value="1"/>
</dbReference>
<dbReference type="FunFam" id="3.30.70.270:FF:000018">
    <property type="entry name" value="Diguanylate cyclase domain protein"/>
    <property type="match status" value="1"/>
</dbReference>
<dbReference type="Gene3D" id="3.30.70.270">
    <property type="match status" value="1"/>
</dbReference>
<dbReference type="Gene3D" id="3.30.450.20">
    <property type="entry name" value="PAS domain"/>
    <property type="match status" value="1"/>
</dbReference>
<dbReference type="InterPro" id="IPR049828">
    <property type="entry name" value="DgcJ_diguan"/>
</dbReference>
<dbReference type="InterPro" id="IPR050469">
    <property type="entry name" value="Diguanylate_Cyclase"/>
</dbReference>
<dbReference type="InterPro" id="IPR033420">
    <property type="entry name" value="GAPES1"/>
</dbReference>
<dbReference type="InterPro" id="IPR000160">
    <property type="entry name" value="GGDEF_dom"/>
</dbReference>
<dbReference type="InterPro" id="IPR029787">
    <property type="entry name" value="Nucleotide_cyclase"/>
</dbReference>
<dbReference type="InterPro" id="IPR043128">
    <property type="entry name" value="Rev_trsase/Diguanyl_cyclase"/>
</dbReference>
<dbReference type="NCBIfam" id="NF040885">
    <property type="entry name" value="diguan_DgcJ"/>
    <property type="match status" value="1"/>
</dbReference>
<dbReference type="NCBIfam" id="TIGR00254">
    <property type="entry name" value="GGDEF"/>
    <property type="match status" value="1"/>
</dbReference>
<dbReference type="PANTHER" id="PTHR45138:SF22">
    <property type="entry name" value="DIGUANYLATE CYCLASE DGCJ-RELATED"/>
    <property type="match status" value="1"/>
</dbReference>
<dbReference type="PANTHER" id="PTHR45138">
    <property type="entry name" value="REGULATORY COMPONENTS OF SENSORY TRANSDUCTION SYSTEM"/>
    <property type="match status" value="1"/>
</dbReference>
<dbReference type="Pfam" id="PF17155">
    <property type="entry name" value="GAPES1"/>
    <property type="match status" value="1"/>
</dbReference>
<dbReference type="Pfam" id="PF00990">
    <property type="entry name" value="GGDEF"/>
    <property type="match status" value="1"/>
</dbReference>
<dbReference type="SMART" id="SM00267">
    <property type="entry name" value="GGDEF"/>
    <property type="match status" value="1"/>
</dbReference>
<dbReference type="SUPFAM" id="SSF55073">
    <property type="entry name" value="Nucleotide cyclase"/>
    <property type="match status" value="1"/>
</dbReference>
<dbReference type="PROSITE" id="PS50887">
    <property type="entry name" value="GGDEF"/>
    <property type="match status" value="1"/>
</dbReference>
<accession>P76237</accession>
<reference key="1">
    <citation type="journal article" date="1996" name="DNA Res.">
        <title>A 460-kb DNA sequence of the Escherichia coli K-12 genome corresponding to the 40.1-50.0 min region on the linkage map.</title>
        <authorList>
            <person name="Itoh T."/>
            <person name="Aiba H."/>
            <person name="Baba T."/>
            <person name="Fujita K."/>
            <person name="Hayashi K."/>
            <person name="Inada T."/>
            <person name="Isono K."/>
            <person name="Kasai H."/>
            <person name="Kimura S."/>
            <person name="Kitakawa M."/>
            <person name="Kitagawa M."/>
            <person name="Makino K."/>
            <person name="Miki T."/>
            <person name="Mizobuchi K."/>
            <person name="Mori H."/>
            <person name="Mori T."/>
            <person name="Motomura K."/>
            <person name="Nakade S."/>
            <person name="Nakamura Y."/>
            <person name="Nashimoto H."/>
            <person name="Nishio Y."/>
            <person name="Oshima T."/>
            <person name="Saito N."/>
            <person name="Sampei G."/>
            <person name="Seki Y."/>
            <person name="Sivasundaram S."/>
            <person name="Tagami H."/>
            <person name="Takeda J."/>
            <person name="Takemoto K."/>
            <person name="Wada C."/>
            <person name="Yamamoto Y."/>
            <person name="Horiuchi T."/>
        </authorList>
    </citation>
    <scope>NUCLEOTIDE SEQUENCE [LARGE SCALE GENOMIC DNA]</scope>
    <source>
        <strain>K12 / W3110 / ATCC 27325 / DSM 5911</strain>
    </source>
</reference>
<reference key="2">
    <citation type="journal article" date="1997" name="Science">
        <title>The complete genome sequence of Escherichia coli K-12.</title>
        <authorList>
            <person name="Blattner F.R."/>
            <person name="Plunkett G. III"/>
            <person name="Bloch C.A."/>
            <person name="Perna N.T."/>
            <person name="Burland V."/>
            <person name="Riley M."/>
            <person name="Collado-Vides J."/>
            <person name="Glasner J.D."/>
            <person name="Rode C.K."/>
            <person name="Mayhew G.F."/>
            <person name="Gregor J."/>
            <person name="Davis N.W."/>
            <person name="Kirkpatrick H.A."/>
            <person name="Goeden M.A."/>
            <person name="Rose D.J."/>
            <person name="Mau B."/>
            <person name="Shao Y."/>
        </authorList>
    </citation>
    <scope>NUCLEOTIDE SEQUENCE [LARGE SCALE GENOMIC DNA]</scope>
    <source>
        <strain>K12 / MG1655 / ATCC 47076</strain>
    </source>
</reference>
<reference key="3">
    <citation type="journal article" date="2006" name="Mol. Syst. Biol.">
        <title>Highly accurate genome sequences of Escherichia coli K-12 strains MG1655 and W3110.</title>
        <authorList>
            <person name="Hayashi K."/>
            <person name="Morooka N."/>
            <person name="Yamamoto Y."/>
            <person name="Fujita K."/>
            <person name="Isono K."/>
            <person name="Choi S."/>
            <person name="Ohtsubo E."/>
            <person name="Baba T."/>
            <person name="Wanner B.L."/>
            <person name="Mori H."/>
            <person name="Horiuchi T."/>
        </authorList>
    </citation>
    <scope>NUCLEOTIDE SEQUENCE [LARGE SCALE GENOMIC DNA]</scope>
    <source>
        <strain>K12 / W3110 / ATCC 27325 / DSM 5911</strain>
    </source>
</reference>
<reference key="4">
    <citation type="journal article" date="2008" name="Genes Dev.">
        <title>Inverse regulatory coordination of motility and curli-mediated adhesion in Escherichia coli.</title>
        <authorList>
            <person name="Pesavento C."/>
            <person name="Becker G."/>
            <person name="Sommerfeldt N."/>
            <person name="Possling A."/>
            <person name="Tschowri N."/>
            <person name="Mehlis A."/>
            <person name="Hengge R."/>
        </authorList>
    </citation>
    <scope>DISRUPTION PHENOTYPE</scope>
    <source>
        <strain>K12 / W3110 / ATCC 27325 / DSM 5911</strain>
    </source>
</reference>
<reference key="5">
    <citation type="journal article" date="2009" name="Microbiology">
        <title>Gene expression patterns and differential input into curli fimbriae regulation of all GGDEF/EAL domain proteins in Escherichia coli.</title>
        <authorList>
            <person name="Sommerfeldt N."/>
            <person name="Possling A."/>
            <person name="Becker G."/>
            <person name="Pesavento C."/>
            <person name="Tschowri N."/>
            <person name="Hengge R."/>
        </authorList>
    </citation>
    <scope>INDUCTION</scope>
    <source>
        <strain>K12 / W3110 / ATCC 27325 / DSM 5911</strain>
    </source>
</reference>
<reference key="6">
    <citation type="journal article" date="2011" name="Appl. Microbiol. Biotechnol.">
        <title>GGDEF proteins YeaI, YedQ, and YfiN reduce early biofilm formation and swimming motility in Escherichia coli.</title>
        <authorList>
            <person name="Sanchez-Torres V."/>
            <person name="Hu H."/>
            <person name="Wood T.K."/>
        </authorList>
    </citation>
    <scope>DISRUPTION PHENOTYPE</scope>
</reference>
<reference key="7">
    <citation type="journal article" date="2015" name="J. Bacteriol.">
        <title>Systematic nomenclature for GGDEF and EAL domain-containing cyclic di-GMP turnover proteins of Escherichia coli.</title>
        <authorList>
            <person name="Hengge R."/>
            <person name="Galperin M.Y."/>
            <person name="Ghigo J.M."/>
            <person name="Gomelsky M."/>
            <person name="Green J."/>
            <person name="Hughes K.T."/>
            <person name="Jenal U."/>
            <person name="Landini P."/>
        </authorList>
    </citation>
    <scope>NOMENCLATURE</scope>
</reference>
<evidence type="ECO:0000250" key="1">
    <source>
        <dbReference type="UniProtKB" id="P31129"/>
    </source>
</evidence>
<evidence type="ECO:0000255" key="2"/>
<evidence type="ECO:0000255" key="3">
    <source>
        <dbReference type="PROSITE-ProRule" id="PRU00095"/>
    </source>
</evidence>
<evidence type="ECO:0000269" key="4">
    <source>
    </source>
</evidence>
<evidence type="ECO:0000269" key="5">
    <source>
    </source>
</evidence>
<evidence type="ECO:0000269" key="6">
    <source>
    </source>
</evidence>
<evidence type="ECO:0000303" key="7">
    <source>
    </source>
</evidence>
<evidence type="ECO:0000305" key="8"/>
<keyword id="KW-0997">Cell inner membrane</keyword>
<keyword id="KW-1003">Cell membrane</keyword>
<keyword id="KW-0342">GTP-binding</keyword>
<keyword id="KW-0460">Magnesium</keyword>
<keyword id="KW-0472">Membrane</keyword>
<keyword id="KW-0479">Metal-binding</keyword>
<keyword id="KW-0547">Nucleotide-binding</keyword>
<keyword id="KW-1185">Reference proteome</keyword>
<keyword id="KW-0808">Transferase</keyword>
<keyword id="KW-0812">Transmembrane</keyword>
<keyword id="KW-1133">Transmembrane helix</keyword>
<protein>
    <recommendedName>
        <fullName evidence="8">Probable diguanylate cyclase DgcJ</fullName>
        <shortName evidence="8">DGC</shortName>
        <ecNumber evidence="1">2.7.7.65</ecNumber>
    </recommendedName>
</protein>
<comment type="function">
    <text evidence="1">Catalyzes the synthesis of cyclic-di-GMP (c-di-GMP) via the condensation of 2 GTP molecules.</text>
</comment>
<comment type="catalytic activity">
    <reaction evidence="1">
        <text>2 GTP = 3',3'-c-di-GMP + 2 diphosphate</text>
        <dbReference type="Rhea" id="RHEA:24898"/>
        <dbReference type="ChEBI" id="CHEBI:33019"/>
        <dbReference type="ChEBI" id="CHEBI:37565"/>
        <dbReference type="ChEBI" id="CHEBI:58805"/>
        <dbReference type="EC" id="2.7.7.65"/>
    </reaction>
</comment>
<comment type="cofactor">
    <cofactor evidence="1">
        <name>Mg(2+)</name>
        <dbReference type="ChEBI" id="CHEBI:18420"/>
    </cofactor>
    <text evidence="1">Binds 1 Mg(2+) ion per monomer.</text>
</comment>
<comment type="pathway">
    <text evidence="8">Purine metabolism; 3',5'-cyclic di-GMP biosynthesis.</text>
</comment>
<comment type="subunit">
    <text evidence="1">Homodimer.</text>
</comment>
<comment type="interaction">
    <interactant intactId="EBI-555763">
        <id>P76237</id>
    </interactant>
    <interactant intactId="EBI-555775">
        <id>P32715</id>
        <label>mdtO</label>
    </interactant>
    <organismsDiffer>false</organismsDiffer>
    <experiments>2</experiments>
</comment>
<comment type="subcellular location">
    <subcellularLocation>
        <location evidence="8">Cell inner membrane</location>
        <topology evidence="2">Multi-pass membrane protein</topology>
    </subcellularLocation>
</comment>
<comment type="induction">
    <text evidence="5">Expressed during exponential and post-exponential growth, it is slightly more highly expressed at 37 than 28 degrees Celsius and is more highly induced on solid medium.</text>
</comment>
<comment type="disruption phenotype">
    <text evidence="4 6">Deletion of the gene increases swimming motility (PubMed:21181144). Disruption of this gene partially suppresses the reduced motility of a pdeH disruption. Full suppression i.e. wild-type motility, requires concomitant disruption of dgcJ, dgcE and dgcQ (PubMed:18765794).</text>
</comment>
<name>DGCJ_ECOLI</name>
<gene>
    <name evidence="7" type="primary">dgcJ</name>
    <name type="synonym">yeaJ</name>
    <name type="ordered locus">b1786</name>
    <name type="ordered locus">JW5291</name>
</gene>
<proteinExistence type="evidence at protein level"/>
<feature type="chain" id="PRO_0000169016" description="Probable diguanylate cyclase DgcJ">
    <location>
        <begin position="1"/>
        <end position="496"/>
    </location>
</feature>
<feature type="transmembrane region" description="Helical" evidence="2">
    <location>
        <begin position="11"/>
        <end position="31"/>
    </location>
</feature>
<feature type="transmembrane region" description="Helical" evidence="2">
    <location>
        <begin position="305"/>
        <end position="325"/>
    </location>
</feature>
<feature type="domain" description="GGDEF" evidence="3">
    <location>
        <begin position="374"/>
        <end position="496"/>
    </location>
</feature>
<feature type="active site" description="Proton acceptor" evidence="2">
    <location>
        <position position="425"/>
    </location>
</feature>
<feature type="binding site" evidence="1">
    <location>
        <position position="382"/>
    </location>
    <ligand>
        <name>Mg(2+)</name>
        <dbReference type="ChEBI" id="CHEBI:18420"/>
    </ligand>
</feature>
<feature type="binding site" evidence="1">
    <location>
        <position position="390"/>
    </location>
    <ligand>
        <name>substrate</name>
    </ligand>
</feature>
<feature type="binding site" evidence="1">
    <location>
        <position position="395"/>
    </location>
    <ligand>
        <name>substrate</name>
    </ligand>
</feature>
<feature type="binding site" evidence="1">
    <location>
        <position position="399"/>
    </location>
    <ligand>
        <name>substrate</name>
    </ligand>
</feature>
<feature type="binding site" evidence="1">
    <location>
        <position position="425"/>
    </location>
    <ligand>
        <name>Mg(2+)</name>
        <dbReference type="ChEBI" id="CHEBI:18420"/>
    </ligand>
</feature>
<feature type="site" description="Transition state stabilizer" evidence="2">
    <location>
        <position position="387"/>
    </location>
</feature>
<sequence>MKLHHRMLRHFIAASVIVLTSSFLIFELVASDRAMSAYLRYIVQKADSSFLYDKYQNQSIAAHVMRALAAEQSEVSPEQRRAICEAFESANNTHGLNLTAHKYPGLRGTLQTASTDCDTIVEAAALLPAFDQAVEGNRHQDDYGSGLGMAEEKFHYYLDLNDRYVYFYEPVNVEYFAMNNWSFLQSGSIGIDRKDIEKVFTGRTVLSSIYQDQRTKQNVMSLLTPVYVAGQLKGIVLLDINKNNLRNIFYTHDRPLLWRFLNVTLTDTDSGRDIIINQSEDNLFQYVSYVHDLPGGIRVSLSIDILYFITSSWKSVLFWILTALILLNMVRMHFRLYQNVSRENISDAMTGLYNRKILTPELEQRLQKLVQSGSSVMFIAIDMDKLKQINDTLGHQEGDLAITLLAQAIKQSIRKSDYAIRLGGDEFCIILVDSTPQIAAQLPERIEKRLQHIAPQKEIGFSSGIYAMKENDTLHDAYKASDERLYVNKQNKNSRS</sequence>